<accession>Q7M3C1</accession>
<name>MYG_AILME</name>
<sequence>GLSDGEWQLVLNVWGKVEADLAGHGQEVLIRLFKGHPETLEKFDKFKHLKSEKGSEDLKKHGNTVETALEGILKKKALELFKNDIAAKTKELGFLG</sequence>
<feature type="chain" id="PRO_0000053276" description="Myoglobin">
    <location>
        <begin position="1" status="less than"/>
        <end position="96" status="greater than"/>
    </location>
</feature>
<feature type="domain" description="Globin" evidence="7">
    <location>
        <begin position="1"/>
        <end position="96"/>
    </location>
</feature>
<feature type="binding site" evidence="5">
    <location>
        <position position="61"/>
    </location>
    <ligand>
        <name>nitrite</name>
        <dbReference type="ChEBI" id="CHEBI:16301"/>
    </ligand>
</feature>
<feature type="binding site" evidence="3 7">
    <location>
        <position position="61"/>
    </location>
    <ligand>
        <name>O2</name>
        <dbReference type="ChEBI" id="CHEBI:15379"/>
    </ligand>
</feature>
<feature type="modified residue" description="Phosphoserine" evidence="6">
    <location>
        <position position="3"/>
    </location>
</feature>
<feature type="modified residue" description="Phosphothreonine" evidence="4">
    <location>
        <position position="64"/>
    </location>
</feature>
<feature type="non-terminal residue">
    <location>
        <position position="1"/>
    </location>
</feature>
<feature type="non-terminal residue">
    <location>
        <position position="96"/>
    </location>
</feature>
<reference key="1">
    <citation type="journal article" date="1993" name="Beijing Da Xue Xue Bao Zi Ran Ke Xue Bao">
        <title>Studies on purification and primary structure of myoglobin from giant panda skeletal muscle.</title>
        <authorList>
            <person name="Cai W.J."/>
            <person name="Zhang T.F."/>
            <person name="He Y.C."/>
            <person name="Yang D."/>
        </authorList>
    </citation>
    <scope>PROTEIN SEQUENCE</scope>
    <source>
        <tissue>Skeletal muscle</tissue>
    </source>
</reference>
<organism>
    <name type="scientific">Ailuropoda melanoleuca</name>
    <name type="common">Giant panda</name>
    <dbReference type="NCBI Taxonomy" id="9646"/>
    <lineage>
        <taxon>Eukaryota</taxon>
        <taxon>Metazoa</taxon>
        <taxon>Chordata</taxon>
        <taxon>Craniata</taxon>
        <taxon>Vertebrata</taxon>
        <taxon>Euteleostomi</taxon>
        <taxon>Mammalia</taxon>
        <taxon>Eutheria</taxon>
        <taxon>Laurasiatheria</taxon>
        <taxon>Carnivora</taxon>
        <taxon>Caniformia</taxon>
        <taxon>Ursidae</taxon>
        <taxon>Ailuropoda</taxon>
    </lineage>
</organism>
<evidence type="ECO:0000250" key="1">
    <source>
        <dbReference type="UniProtKB" id="P02144"/>
    </source>
</evidence>
<evidence type="ECO:0000250" key="2">
    <source>
        <dbReference type="UniProtKB" id="P02185"/>
    </source>
</evidence>
<evidence type="ECO:0000250" key="3">
    <source>
        <dbReference type="UniProtKB" id="P02189"/>
    </source>
</evidence>
<evidence type="ECO:0000250" key="4">
    <source>
        <dbReference type="UniProtKB" id="P04247"/>
    </source>
</evidence>
<evidence type="ECO:0000250" key="5">
    <source>
        <dbReference type="UniProtKB" id="P68082"/>
    </source>
</evidence>
<evidence type="ECO:0000250" key="6">
    <source>
        <dbReference type="UniProtKB" id="Q9QZ76"/>
    </source>
</evidence>
<evidence type="ECO:0000255" key="7">
    <source>
        <dbReference type="PROSITE-ProRule" id="PRU00238"/>
    </source>
</evidence>
<keyword id="KW-0963">Cytoplasm</keyword>
<keyword id="KW-0903">Direct protein sequencing</keyword>
<keyword id="KW-0349">Heme</keyword>
<keyword id="KW-0408">Iron</keyword>
<keyword id="KW-0479">Metal-binding</keyword>
<keyword id="KW-0514">Muscle protein</keyword>
<keyword id="KW-0560">Oxidoreductase</keyword>
<keyword id="KW-0561">Oxygen transport</keyword>
<keyword id="KW-0597">Phosphoprotein</keyword>
<keyword id="KW-1185">Reference proteome</keyword>
<keyword id="KW-0813">Transport</keyword>
<gene>
    <name type="primary">MB</name>
</gene>
<protein>
    <recommendedName>
        <fullName>Myoglobin</fullName>
    </recommendedName>
    <alternativeName>
        <fullName evidence="1">Nitrite reductase MB</fullName>
        <ecNumber evidence="1">1.7.-.-</ecNumber>
    </alternativeName>
    <alternativeName>
        <fullName evidence="1">Pseudoperoxidase MB</fullName>
        <ecNumber evidence="1">1.11.1.-</ecNumber>
    </alternativeName>
</protein>
<dbReference type="EC" id="1.7.-.-" evidence="1"/>
<dbReference type="EC" id="1.11.1.-" evidence="1"/>
<dbReference type="PIR" id="JC1086">
    <property type="entry name" value="JC1086"/>
</dbReference>
<dbReference type="SMR" id="Q7M3C1"/>
<dbReference type="InParanoid" id="Q7M3C1"/>
<dbReference type="Proteomes" id="UP000008912">
    <property type="component" value="Unassembled WGS sequence"/>
</dbReference>
<dbReference type="GO" id="GO:0070062">
    <property type="term" value="C:extracellular exosome"/>
    <property type="evidence" value="ECO:0007669"/>
    <property type="project" value="TreeGrafter"/>
</dbReference>
<dbReference type="GO" id="GO:0016528">
    <property type="term" value="C:sarcoplasm"/>
    <property type="evidence" value="ECO:0000250"/>
    <property type="project" value="UniProtKB"/>
</dbReference>
<dbReference type="GO" id="GO:0020037">
    <property type="term" value="F:heme binding"/>
    <property type="evidence" value="ECO:0007669"/>
    <property type="project" value="InterPro"/>
</dbReference>
<dbReference type="GO" id="GO:0046872">
    <property type="term" value="F:metal ion binding"/>
    <property type="evidence" value="ECO:0007669"/>
    <property type="project" value="UniProtKB-KW"/>
</dbReference>
<dbReference type="GO" id="GO:0098809">
    <property type="term" value="F:nitrite reductase activity"/>
    <property type="evidence" value="ECO:0000250"/>
    <property type="project" value="UniProtKB"/>
</dbReference>
<dbReference type="GO" id="GO:0019825">
    <property type="term" value="F:oxygen binding"/>
    <property type="evidence" value="ECO:0007669"/>
    <property type="project" value="InterPro"/>
</dbReference>
<dbReference type="GO" id="GO:0005344">
    <property type="term" value="F:oxygen carrier activity"/>
    <property type="evidence" value="ECO:0000250"/>
    <property type="project" value="UniProtKB"/>
</dbReference>
<dbReference type="GO" id="GO:0004601">
    <property type="term" value="F:peroxidase activity"/>
    <property type="evidence" value="ECO:0000250"/>
    <property type="project" value="UniProtKB"/>
</dbReference>
<dbReference type="GO" id="GO:0019430">
    <property type="term" value="P:removal of superoxide radicals"/>
    <property type="evidence" value="ECO:0000250"/>
    <property type="project" value="UniProtKB"/>
</dbReference>
<dbReference type="Gene3D" id="6.10.140.2100">
    <property type="match status" value="1"/>
</dbReference>
<dbReference type="InterPro" id="IPR000971">
    <property type="entry name" value="Globin"/>
</dbReference>
<dbReference type="InterPro" id="IPR009050">
    <property type="entry name" value="Globin-like_sf"/>
</dbReference>
<dbReference type="InterPro" id="IPR002335">
    <property type="entry name" value="Myoglobin"/>
</dbReference>
<dbReference type="PANTHER" id="PTHR47132">
    <property type="entry name" value="MYOGLOBIN"/>
    <property type="match status" value="1"/>
</dbReference>
<dbReference type="PANTHER" id="PTHR47132:SF1">
    <property type="entry name" value="MYOGLOBIN"/>
    <property type="match status" value="1"/>
</dbReference>
<dbReference type="Pfam" id="PF00042">
    <property type="entry name" value="Globin"/>
    <property type="match status" value="1"/>
</dbReference>
<dbReference type="PRINTS" id="PR00613">
    <property type="entry name" value="MYOGLOBIN"/>
</dbReference>
<dbReference type="SUPFAM" id="SSF46458">
    <property type="entry name" value="Globin-like"/>
    <property type="match status" value="1"/>
</dbReference>
<dbReference type="PROSITE" id="PS01033">
    <property type="entry name" value="GLOBIN"/>
    <property type="match status" value="1"/>
</dbReference>
<proteinExistence type="evidence at protein level"/>
<comment type="function">
    <text evidence="1">Monomeric heme protein which primary function is to store oxygen and facilitate its diffusion within muscle tissues. Reversibly binds oxygen through a pentacoordinated heme iron and enables its timely and efficient release as needed during periods of heightened demand. Depending on the oxidative conditions of tissues and cells, and in addition to its ability to bind oxygen, it also has a nitrite reductase activity whereby it regulates the production of bioactive nitric oxide. Under stress conditions, like hypoxia and anoxia, it also protects cells against reactive oxygen species thanks to its pseudoperoxidase activity.</text>
</comment>
<comment type="catalytic activity">
    <reaction evidence="1">
        <text>Fe(III)-heme b-[protein] + nitric oxide + H2O = Fe(II)-heme b-[protein] + nitrite + 2 H(+)</text>
        <dbReference type="Rhea" id="RHEA:77711"/>
        <dbReference type="Rhea" id="RHEA-COMP:18975"/>
        <dbReference type="Rhea" id="RHEA-COMP:18976"/>
        <dbReference type="ChEBI" id="CHEBI:15377"/>
        <dbReference type="ChEBI" id="CHEBI:15378"/>
        <dbReference type="ChEBI" id="CHEBI:16301"/>
        <dbReference type="ChEBI" id="CHEBI:16480"/>
        <dbReference type="ChEBI" id="CHEBI:55376"/>
        <dbReference type="ChEBI" id="CHEBI:60344"/>
    </reaction>
    <physiologicalReaction direction="right-to-left" evidence="1">
        <dbReference type="Rhea" id="RHEA:77713"/>
    </physiologicalReaction>
</comment>
<comment type="catalytic activity">
    <reaction evidence="1">
        <text>H2O2 + AH2 = A + 2 H2O</text>
        <dbReference type="Rhea" id="RHEA:30275"/>
        <dbReference type="ChEBI" id="CHEBI:13193"/>
        <dbReference type="ChEBI" id="CHEBI:15377"/>
        <dbReference type="ChEBI" id="CHEBI:16240"/>
        <dbReference type="ChEBI" id="CHEBI:17499"/>
    </reaction>
</comment>
<comment type="subunit">
    <text evidence="2">Monomeric.</text>
</comment>
<comment type="subcellular location">
    <subcellularLocation>
        <location evidence="1">Cytoplasm</location>
        <location evidence="1">Sarcoplasm</location>
    </subcellularLocation>
</comment>
<comment type="similarity">
    <text evidence="7">Belongs to the globin family.</text>
</comment>